<dbReference type="EMBL" id="AL123456">
    <property type="protein sequence ID" value="CCP43015.1"/>
    <property type="molecule type" value="Genomic_DNA"/>
</dbReference>
<dbReference type="RefSeq" id="WP_003401485.1">
    <property type="nucleotide sequence ID" value="NZ_NVQJ01000026.1"/>
</dbReference>
<dbReference type="RefSeq" id="YP_177710.1">
    <property type="nucleotide sequence ID" value="NC_000962.3"/>
</dbReference>
<dbReference type="PDB" id="6UUJ">
    <property type="method" value="X-ray"/>
    <property type="resolution" value="3.00 A"/>
    <property type="chains" value="A/D/G/J=6-102"/>
</dbReference>
<dbReference type="PDB" id="6VHR">
    <property type="method" value="X-ray"/>
    <property type="resolution" value="3.30 A"/>
    <property type="chains" value="A=6-102"/>
</dbReference>
<dbReference type="PDBsum" id="6UUJ"/>
<dbReference type="PDBsum" id="6VHR"/>
<dbReference type="SASBDB" id="L7N695"/>
<dbReference type="SMR" id="L7N695"/>
<dbReference type="STRING" id="83332.Rv0285"/>
<dbReference type="PaxDb" id="83332-Rv0285"/>
<dbReference type="DNASU" id="886608"/>
<dbReference type="GeneID" id="886608"/>
<dbReference type="KEGG" id="mtu:Rv0285"/>
<dbReference type="KEGG" id="mtv:RVBD_0285"/>
<dbReference type="PATRIC" id="fig|83332.111.peg.321"/>
<dbReference type="TubercuList" id="Rv0285"/>
<dbReference type="eggNOG" id="ENOG50320GU">
    <property type="taxonomic scope" value="Bacteria"/>
</dbReference>
<dbReference type="HOGENOM" id="CLU_162350_0_0_11"/>
<dbReference type="InParanoid" id="L7N695"/>
<dbReference type="OrthoDB" id="4753018at2"/>
<dbReference type="PhylomeDB" id="L7N695"/>
<dbReference type="Proteomes" id="UP000001584">
    <property type="component" value="Chromosome"/>
</dbReference>
<dbReference type="GO" id="GO:0030313">
    <property type="term" value="C:cell envelope"/>
    <property type="evidence" value="ECO:0007669"/>
    <property type="project" value="UniProtKB-SubCell"/>
</dbReference>
<dbReference type="GO" id="GO:0009986">
    <property type="term" value="C:cell surface"/>
    <property type="evidence" value="ECO:0007669"/>
    <property type="project" value="UniProtKB-SubCell"/>
</dbReference>
<dbReference type="GO" id="GO:0005576">
    <property type="term" value="C:extracellular region"/>
    <property type="evidence" value="ECO:0007669"/>
    <property type="project" value="UniProtKB-SubCell"/>
</dbReference>
<dbReference type="FunFam" id="1.10.287.850:FF:000002">
    <property type="entry name" value="PE family immunomodulator PE15"/>
    <property type="match status" value="1"/>
</dbReference>
<dbReference type="Gene3D" id="1.10.287.850">
    <property type="entry name" value="HP0062-like domain"/>
    <property type="match status" value="1"/>
</dbReference>
<dbReference type="InterPro" id="IPR000084">
    <property type="entry name" value="PE-PGRS_N"/>
</dbReference>
<dbReference type="Pfam" id="PF00934">
    <property type="entry name" value="PE"/>
    <property type="match status" value="1"/>
</dbReference>
<dbReference type="SUPFAM" id="SSF140459">
    <property type="entry name" value="PE/PPE dimer-like"/>
    <property type="match status" value="1"/>
</dbReference>
<gene>
    <name evidence="4 6" type="primary">PE5</name>
    <name evidence="6" type="ordered locus">Rv0285</name>
</gene>
<evidence type="ECO:0000255" key="1"/>
<evidence type="ECO:0000269" key="2">
    <source>
    </source>
</evidence>
<evidence type="ECO:0000269" key="3">
    <source>
    </source>
</evidence>
<evidence type="ECO:0000303" key="4">
    <source>
    </source>
</evidence>
<evidence type="ECO:0000305" key="5"/>
<evidence type="ECO:0000312" key="6">
    <source>
        <dbReference type="EMBL" id="CCP43015.1"/>
    </source>
</evidence>
<evidence type="ECO:0007829" key="7">
    <source>
        <dbReference type="PDB" id="6UUJ"/>
    </source>
</evidence>
<keyword id="KW-0002">3D-structure</keyword>
<keyword id="KW-1185">Reference proteome</keyword>
<keyword id="KW-0964">Secreted</keyword>
<keyword id="KW-0843">Virulence</keyword>
<organism>
    <name type="scientific">Mycobacterium tuberculosis (strain ATCC 25618 / H37Rv)</name>
    <dbReference type="NCBI Taxonomy" id="83332"/>
    <lineage>
        <taxon>Bacteria</taxon>
        <taxon>Bacillati</taxon>
        <taxon>Actinomycetota</taxon>
        <taxon>Actinomycetes</taxon>
        <taxon>Mycobacteriales</taxon>
        <taxon>Mycobacteriaceae</taxon>
        <taxon>Mycobacterium</taxon>
        <taxon>Mycobacterium tuberculosis complex</taxon>
    </lineage>
</organism>
<comment type="function">
    <text evidence="2 3">Important for the siderophore-mediated iron-acquisition function of ESX-3 (PubMed:26729876). May play a pivotal role in the evasion of host immune response by M.tuberculosis. Mediates production of IL-10 via activation of the p38 and ERK1/2 mitogen-activated protein kinase (MAPK) signaling pathways (PubMed:23284742).</text>
</comment>
<comment type="subcellular location">
    <subcellularLocation>
        <location evidence="3">Secreted</location>
    </subcellularLocation>
    <subcellularLocation>
        <location evidence="2">Cell envelope</location>
    </subcellularLocation>
    <subcellularLocation>
        <location evidence="2">Cell surface</location>
    </subcellularLocation>
    <text evidence="3">Secreted via the ESX-3 / type VII secretion system (T7SS) (PubMed:26729876). Secretion is dependent on EsxG and EsxH (PubMed:26729876).</text>
</comment>
<comment type="disruption phenotype">
    <text evidence="3">PE5-PPE4 double mutant exhibits a severe iron phenotype but secretes EsxG and EsxH normally. Mildly attenuated in vivo.</text>
</comment>
<comment type="similarity">
    <text evidence="5">Belongs to the mycobacterial PE family.</text>
</comment>
<reference key="1">
    <citation type="journal article" date="1998" name="Nature">
        <title>Deciphering the biology of Mycobacterium tuberculosis from the complete genome sequence.</title>
        <authorList>
            <person name="Cole S.T."/>
            <person name="Brosch R."/>
            <person name="Parkhill J."/>
            <person name="Garnier T."/>
            <person name="Churcher C.M."/>
            <person name="Harris D.E."/>
            <person name="Gordon S.V."/>
            <person name="Eiglmeier K."/>
            <person name="Gas S."/>
            <person name="Barry C.E. III"/>
            <person name="Tekaia F."/>
            <person name="Badcock K."/>
            <person name="Basham D."/>
            <person name="Brown D."/>
            <person name="Chillingworth T."/>
            <person name="Connor R."/>
            <person name="Davies R.M."/>
            <person name="Devlin K."/>
            <person name="Feltwell T."/>
            <person name="Gentles S."/>
            <person name="Hamlin N."/>
            <person name="Holroyd S."/>
            <person name="Hornsby T."/>
            <person name="Jagels K."/>
            <person name="Krogh A."/>
            <person name="McLean J."/>
            <person name="Moule S."/>
            <person name="Murphy L.D."/>
            <person name="Oliver S."/>
            <person name="Osborne J."/>
            <person name="Quail M.A."/>
            <person name="Rajandream M.A."/>
            <person name="Rogers J."/>
            <person name="Rutter S."/>
            <person name="Seeger K."/>
            <person name="Skelton S."/>
            <person name="Squares S."/>
            <person name="Squares R."/>
            <person name="Sulston J.E."/>
            <person name="Taylor K."/>
            <person name="Whitehead S."/>
            <person name="Barrell B.G."/>
        </authorList>
    </citation>
    <scope>NUCLEOTIDE SEQUENCE [LARGE SCALE GENOMIC DNA]</scope>
    <source>
        <strain>ATCC 25618 / H37Rv</strain>
    </source>
</reference>
<reference key="2">
    <citation type="journal article" date="2011" name="Mol. Cell. Proteomics">
        <title>Proteogenomic analysis of Mycobacterium tuberculosis by high resolution mass spectrometry.</title>
        <authorList>
            <person name="Kelkar D.S."/>
            <person name="Kumar D."/>
            <person name="Kumar P."/>
            <person name="Balakrishnan L."/>
            <person name="Muthusamy B."/>
            <person name="Yadav A.K."/>
            <person name="Shrivastava P."/>
            <person name="Marimuthu A."/>
            <person name="Anand S."/>
            <person name="Sundaram H."/>
            <person name="Kingsbury R."/>
            <person name="Harsha H.C."/>
            <person name="Nair B."/>
            <person name="Prasad T.S."/>
            <person name="Chauhan D.S."/>
            <person name="Katoch K."/>
            <person name="Katoch V.M."/>
            <person name="Kumar P."/>
            <person name="Chaerkady R."/>
            <person name="Ramachandran S."/>
            <person name="Dash D."/>
            <person name="Pandey A."/>
        </authorList>
    </citation>
    <scope>IDENTIFICATION BY MASS SPECTROMETRY [LARGE SCALE ANALYSIS]</scope>
    <source>
        <strain>ATCC 25618 / H37Rv</strain>
    </source>
</reference>
<reference key="3">
    <citation type="journal article" date="2012" name="PLoS ONE">
        <title>The Mycobacterium tuberculosis PE proteins Rv0285 and Rv1386 modulate innate immunity and mediate bacillary survival in macrophages.</title>
        <authorList>
            <person name="Tiwari B.M."/>
            <person name="Kannan N."/>
            <person name="Vemu L."/>
            <person name="Raghunand T.R."/>
        </authorList>
    </citation>
    <scope>FUNCTION</scope>
    <scope>SUBCELLULAR LOCATION</scope>
</reference>
<reference key="4">
    <citation type="journal article" date="2016" name="Proc. Natl. Acad. Sci. U.S.A.">
        <title>Separable roles for Mycobacterium tuberculosis ESX-3 effectors in iron acquisition and virulence.</title>
        <authorList>
            <person name="Tufariello J.M."/>
            <person name="Chapman J.R."/>
            <person name="Kerantzas C.A."/>
            <person name="Wong K.W."/>
            <person name="Vilcheze C."/>
            <person name="Jones C.M."/>
            <person name="Cole L.E."/>
            <person name="Tinaztepe E."/>
            <person name="Thompson V."/>
            <person name="Fenyoe D."/>
            <person name="Niederweis M."/>
            <person name="Ueberheide B."/>
            <person name="Philips J.A."/>
            <person name="Jacobs W.R. Jr."/>
        </authorList>
    </citation>
    <scope>FUNCTION IN IRON ACQUISITION</scope>
    <scope>SUBCELLULAR LOCATION</scope>
    <scope>DISRUPTION PHENOTYPE</scope>
</reference>
<sequence length="102" mass="9566">MTLRVVPEGLAAASAAVEALTARLAAAHASAAPVITAVVPPAADPVSLQTAAGFSAQGVEHAVVTAEGVEELGRAGVGVGESGASYLAGDAAAAATYGVVGG</sequence>
<accession>L7N695</accession>
<accession>I6Y7F5</accession>
<feature type="chain" id="PRO_5007687871" description="PE family immunomodulator PE5">
    <location>
        <begin position="1"/>
        <end position="102"/>
    </location>
</feature>
<feature type="domain" description="PE" evidence="1">
    <location>
        <begin position="3"/>
        <end position="92"/>
    </location>
</feature>
<feature type="helix" evidence="7">
    <location>
        <begin position="11"/>
        <end position="30"/>
    </location>
</feature>
<feature type="helix" evidence="7">
    <location>
        <begin position="32"/>
        <end position="36"/>
    </location>
</feature>
<feature type="strand" evidence="7">
    <location>
        <begin position="41"/>
        <end position="44"/>
    </location>
</feature>
<feature type="helix" evidence="7">
    <location>
        <begin position="45"/>
        <end position="73"/>
    </location>
</feature>
<protein>
    <recommendedName>
        <fullName evidence="5">PE family immunomodulator PE5</fullName>
    </recommendedName>
</protein>
<name>PE05_MYCTU</name>
<proteinExistence type="evidence at protein level"/>